<name>XPT_PSEP1</name>
<organism>
    <name type="scientific">Pseudomonas putida (strain ATCC 700007 / DSM 6899 / JCM 31910 / BCRC 17059 / LMG 24140 / F1)</name>
    <dbReference type="NCBI Taxonomy" id="351746"/>
    <lineage>
        <taxon>Bacteria</taxon>
        <taxon>Pseudomonadati</taxon>
        <taxon>Pseudomonadota</taxon>
        <taxon>Gammaproteobacteria</taxon>
        <taxon>Pseudomonadales</taxon>
        <taxon>Pseudomonadaceae</taxon>
        <taxon>Pseudomonas</taxon>
    </lineage>
</organism>
<gene>
    <name evidence="1" type="primary">xpt</name>
    <name type="ordered locus">Pput_5175</name>
</gene>
<dbReference type="EC" id="2.4.2.22" evidence="1"/>
<dbReference type="EMBL" id="CP000712">
    <property type="protein sequence ID" value="ABQ81293.1"/>
    <property type="molecule type" value="Genomic_DNA"/>
</dbReference>
<dbReference type="SMR" id="A5WAY3"/>
<dbReference type="KEGG" id="ppf:Pput_5175"/>
<dbReference type="eggNOG" id="COG0503">
    <property type="taxonomic scope" value="Bacteria"/>
</dbReference>
<dbReference type="HOGENOM" id="CLU_099015_0_0_6"/>
<dbReference type="UniPathway" id="UPA00602">
    <property type="reaction ID" value="UER00658"/>
</dbReference>
<dbReference type="GO" id="GO:0005737">
    <property type="term" value="C:cytoplasm"/>
    <property type="evidence" value="ECO:0007669"/>
    <property type="project" value="UniProtKB-SubCell"/>
</dbReference>
<dbReference type="GO" id="GO:0000310">
    <property type="term" value="F:xanthine phosphoribosyltransferase activity"/>
    <property type="evidence" value="ECO:0007669"/>
    <property type="project" value="UniProtKB-UniRule"/>
</dbReference>
<dbReference type="GO" id="GO:0006166">
    <property type="term" value="P:purine ribonucleoside salvage"/>
    <property type="evidence" value="ECO:0007669"/>
    <property type="project" value="UniProtKB-KW"/>
</dbReference>
<dbReference type="GO" id="GO:0046110">
    <property type="term" value="P:xanthine metabolic process"/>
    <property type="evidence" value="ECO:0007669"/>
    <property type="project" value="InterPro"/>
</dbReference>
<dbReference type="GO" id="GO:0032265">
    <property type="term" value="P:XMP salvage"/>
    <property type="evidence" value="ECO:0007669"/>
    <property type="project" value="UniProtKB-UniRule"/>
</dbReference>
<dbReference type="CDD" id="cd06223">
    <property type="entry name" value="PRTases_typeI"/>
    <property type="match status" value="1"/>
</dbReference>
<dbReference type="FunFam" id="3.40.50.2020:FF:000027">
    <property type="entry name" value="Xanthine phosphoribosyltransferase"/>
    <property type="match status" value="1"/>
</dbReference>
<dbReference type="Gene3D" id="3.40.50.2020">
    <property type="match status" value="1"/>
</dbReference>
<dbReference type="HAMAP" id="MF_01184">
    <property type="entry name" value="XPRTase"/>
    <property type="match status" value="1"/>
</dbReference>
<dbReference type="InterPro" id="IPR000836">
    <property type="entry name" value="PRibTrfase_dom"/>
</dbReference>
<dbReference type="InterPro" id="IPR029057">
    <property type="entry name" value="PRTase-like"/>
</dbReference>
<dbReference type="InterPro" id="IPR050118">
    <property type="entry name" value="Pur/Pyrimidine_PRTase"/>
</dbReference>
<dbReference type="InterPro" id="IPR010079">
    <property type="entry name" value="Xanthine_PRibTrfase"/>
</dbReference>
<dbReference type="NCBIfam" id="NF006671">
    <property type="entry name" value="PRK09219.1"/>
    <property type="match status" value="1"/>
</dbReference>
<dbReference type="NCBIfam" id="TIGR01744">
    <property type="entry name" value="XPRTase"/>
    <property type="match status" value="1"/>
</dbReference>
<dbReference type="PANTHER" id="PTHR43864">
    <property type="entry name" value="HYPOXANTHINE/GUANINE PHOSPHORIBOSYLTRANSFERASE"/>
    <property type="match status" value="1"/>
</dbReference>
<dbReference type="PANTHER" id="PTHR43864:SF1">
    <property type="entry name" value="XANTHINE PHOSPHORIBOSYLTRANSFERASE"/>
    <property type="match status" value="1"/>
</dbReference>
<dbReference type="SUPFAM" id="SSF53271">
    <property type="entry name" value="PRTase-like"/>
    <property type="match status" value="1"/>
</dbReference>
<reference key="1">
    <citation type="submission" date="2007-05" db="EMBL/GenBank/DDBJ databases">
        <title>Complete sequence of Pseudomonas putida F1.</title>
        <authorList>
            <consortium name="US DOE Joint Genome Institute"/>
            <person name="Copeland A."/>
            <person name="Lucas S."/>
            <person name="Lapidus A."/>
            <person name="Barry K."/>
            <person name="Detter J.C."/>
            <person name="Glavina del Rio T."/>
            <person name="Hammon N."/>
            <person name="Israni S."/>
            <person name="Dalin E."/>
            <person name="Tice H."/>
            <person name="Pitluck S."/>
            <person name="Chain P."/>
            <person name="Malfatti S."/>
            <person name="Shin M."/>
            <person name="Vergez L."/>
            <person name="Schmutz J."/>
            <person name="Larimer F."/>
            <person name="Land M."/>
            <person name="Hauser L."/>
            <person name="Kyrpides N."/>
            <person name="Lykidis A."/>
            <person name="Parales R."/>
            <person name="Richardson P."/>
        </authorList>
    </citation>
    <scope>NUCLEOTIDE SEQUENCE [LARGE SCALE GENOMIC DNA]</scope>
    <source>
        <strain>ATCC 700007 / DSM 6899 / JCM 31910 / BCRC 17059 / LMG 24140 / F1</strain>
    </source>
</reference>
<protein>
    <recommendedName>
        <fullName evidence="1">Xanthine phosphoribosyltransferase</fullName>
        <shortName evidence="1">XPRTase</shortName>
        <ecNumber evidence="1">2.4.2.22</ecNumber>
    </recommendedName>
</protein>
<accession>A5WAY3</accession>
<comment type="function">
    <text evidence="1">Converts the preformed base xanthine, a product of nucleic acid breakdown, to xanthosine 5'-monophosphate (XMP), so it can be reused for RNA or DNA synthesis.</text>
</comment>
<comment type="catalytic activity">
    <reaction evidence="1">
        <text>XMP + diphosphate = xanthine + 5-phospho-alpha-D-ribose 1-diphosphate</text>
        <dbReference type="Rhea" id="RHEA:10800"/>
        <dbReference type="ChEBI" id="CHEBI:17712"/>
        <dbReference type="ChEBI" id="CHEBI:33019"/>
        <dbReference type="ChEBI" id="CHEBI:57464"/>
        <dbReference type="ChEBI" id="CHEBI:58017"/>
        <dbReference type="EC" id="2.4.2.22"/>
    </reaction>
</comment>
<comment type="pathway">
    <text evidence="1">Purine metabolism; XMP biosynthesis via salvage pathway; XMP from xanthine: step 1/1.</text>
</comment>
<comment type="subunit">
    <text evidence="1">Homodimer.</text>
</comment>
<comment type="subcellular location">
    <subcellularLocation>
        <location evidence="1">Cytoplasm</location>
    </subcellularLocation>
</comment>
<comment type="similarity">
    <text evidence="1">Belongs to the purine/pyrimidine phosphoribosyltransferase family. Xpt subfamily.</text>
</comment>
<sequence>MEALHQKIREEGIVLSDQVLKVDAFLNHQIDPALMQLIGDEFARLFADAGVTKIVTIEASGIAPAVMTGLKLGVPVIFARKHQSLTLTENLLTASVYSFTKQTENTVAISPRHLNSSDRVLVIDDFLANGKASQALISIIKQAGATVAGLGIVIEKSFQGGRAELDSQGYRVESLARVKSLEGGVVSFIE</sequence>
<feature type="chain" id="PRO_0000339734" description="Xanthine phosphoribosyltransferase">
    <location>
        <begin position="1"/>
        <end position="190"/>
    </location>
</feature>
<feature type="binding site" evidence="1">
    <location>
        <position position="20"/>
    </location>
    <ligand>
        <name>xanthine</name>
        <dbReference type="ChEBI" id="CHEBI:17712"/>
    </ligand>
</feature>
<feature type="binding site" evidence="1">
    <location>
        <position position="27"/>
    </location>
    <ligand>
        <name>xanthine</name>
        <dbReference type="ChEBI" id="CHEBI:17712"/>
    </ligand>
</feature>
<feature type="binding site" evidence="1">
    <location>
        <begin position="128"/>
        <end position="132"/>
    </location>
    <ligand>
        <name>5-phospho-alpha-D-ribose 1-diphosphate</name>
        <dbReference type="ChEBI" id="CHEBI:58017"/>
    </ligand>
</feature>
<feature type="binding site" evidence="1">
    <location>
        <position position="156"/>
    </location>
    <ligand>
        <name>xanthine</name>
        <dbReference type="ChEBI" id="CHEBI:17712"/>
    </ligand>
</feature>
<evidence type="ECO:0000255" key="1">
    <source>
        <dbReference type="HAMAP-Rule" id="MF_01184"/>
    </source>
</evidence>
<keyword id="KW-0963">Cytoplasm</keyword>
<keyword id="KW-0328">Glycosyltransferase</keyword>
<keyword id="KW-0660">Purine salvage</keyword>
<keyword id="KW-0808">Transferase</keyword>
<proteinExistence type="inferred from homology"/>